<feature type="chain" id="PRO_1000058340" description="ATP-dependent Clp protease ATP-binding subunit ClpX">
    <location>
        <begin position="1"/>
        <end position="426"/>
    </location>
</feature>
<feature type="domain" description="ClpX-type ZB" evidence="2">
    <location>
        <begin position="6"/>
        <end position="59"/>
    </location>
</feature>
<feature type="binding site" evidence="2">
    <location>
        <position position="18"/>
    </location>
    <ligand>
        <name>Zn(2+)</name>
        <dbReference type="ChEBI" id="CHEBI:29105"/>
    </ligand>
</feature>
<feature type="binding site" evidence="2">
    <location>
        <position position="21"/>
    </location>
    <ligand>
        <name>Zn(2+)</name>
        <dbReference type="ChEBI" id="CHEBI:29105"/>
    </ligand>
</feature>
<feature type="binding site" evidence="2">
    <location>
        <position position="40"/>
    </location>
    <ligand>
        <name>Zn(2+)</name>
        <dbReference type="ChEBI" id="CHEBI:29105"/>
    </ligand>
</feature>
<feature type="binding site" evidence="2">
    <location>
        <position position="43"/>
    </location>
    <ligand>
        <name>Zn(2+)</name>
        <dbReference type="ChEBI" id="CHEBI:29105"/>
    </ligand>
</feature>
<feature type="binding site" evidence="1">
    <location>
        <begin position="122"/>
        <end position="129"/>
    </location>
    <ligand>
        <name>ATP</name>
        <dbReference type="ChEBI" id="CHEBI:30616"/>
    </ligand>
</feature>
<keyword id="KW-0067">ATP-binding</keyword>
<keyword id="KW-0143">Chaperone</keyword>
<keyword id="KW-0479">Metal-binding</keyword>
<keyword id="KW-0547">Nucleotide-binding</keyword>
<keyword id="KW-1185">Reference proteome</keyword>
<keyword id="KW-0862">Zinc</keyword>
<reference key="1">
    <citation type="submission" date="2006-12" db="EMBL/GenBank/DDBJ databases">
        <title>Complete sequence of Halorhodospira halophila SL1.</title>
        <authorList>
            <consortium name="US DOE Joint Genome Institute"/>
            <person name="Copeland A."/>
            <person name="Lucas S."/>
            <person name="Lapidus A."/>
            <person name="Barry K."/>
            <person name="Detter J.C."/>
            <person name="Glavina del Rio T."/>
            <person name="Hammon N."/>
            <person name="Israni S."/>
            <person name="Dalin E."/>
            <person name="Tice H."/>
            <person name="Pitluck S."/>
            <person name="Saunders E."/>
            <person name="Brettin T."/>
            <person name="Bruce D."/>
            <person name="Han C."/>
            <person name="Tapia R."/>
            <person name="Schmutz J."/>
            <person name="Larimer F."/>
            <person name="Land M."/>
            <person name="Hauser L."/>
            <person name="Kyrpides N."/>
            <person name="Mikhailova N."/>
            <person name="Hoff W."/>
            <person name="Richardson P."/>
        </authorList>
    </citation>
    <scope>NUCLEOTIDE SEQUENCE [LARGE SCALE GENOMIC DNA]</scope>
    <source>
        <strain>DSM 244 / SL1</strain>
    </source>
</reference>
<protein>
    <recommendedName>
        <fullName evidence="1">ATP-dependent Clp protease ATP-binding subunit ClpX</fullName>
    </recommendedName>
</protein>
<accession>A1WUM6</accession>
<sequence length="426" mass="46804">MTDRTQNKGDDSGKLLYCSFCGKSQHEVRKLIAGPSVFICDECVELCNDIIREELQEGAATEGGGLPRPHEINRELDQYVIGQEHAKKVLSVAVYNHYKRLESRTSQDDVELTKSNILLIGPTGSGKTLLAETLARLLNVPFTIADATTLTEAGYVGEDVENIIQKLLQKCDYDVEKAQHGIVYIDEIDKVSRKADNPSITRDVSGEGVQQALLKLIEGTTASVPPQGGRKHPQQEFVQVDTSNMLFICGGAFAGLDKVIQERSERGGIGFSAEIKGEGERASVGETLQTVEPSDLVRYGLIPEFVGRLPVIATLNELDQEALVQILREPKNALVKQYQKLFEMEGVELDLRDDALRAVADKAMERKTGARGLRTIIEQVLLETMYELPSMENVSKVVVDESVIAGDSDPYIVYAGPEHSKAASDE</sequence>
<dbReference type="EMBL" id="CP000544">
    <property type="protein sequence ID" value="ABM61388.1"/>
    <property type="molecule type" value="Genomic_DNA"/>
</dbReference>
<dbReference type="RefSeq" id="WP_011813411.1">
    <property type="nucleotide sequence ID" value="NC_008789.1"/>
</dbReference>
<dbReference type="SMR" id="A1WUM6"/>
<dbReference type="STRING" id="349124.Hhal_0602"/>
<dbReference type="KEGG" id="hha:Hhal_0602"/>
<dbReference type="eggNOG" id="COG1219">
    <property type="taxonomic scope" value="Bacteria"/>
</dbReference>
<dbReference type="HOGENOM" id="CLU_014218_8_2_6"/>
<dbReference type="OrthoDB" id="9804062at2"/>
<dbReference type="Proteomes" id="UP000000647">
    <property type="component" value="Chromosome"/>
</dbReference>
<dbReference type="GO" id="GO:0009376">
    <property type="term" value="C:HslUV protease complex"/>
    <property type="evidence" value="ECO:0007669"/>
    <property type="project" value="TreeGrafter"/>
</dbReference>
<dbReference type="GO" id="GO:0005524">
    <property type="term" value="F:ATP binding"/>
    <property type="evidence" value="ECO:0007669"/>
    <property type="project" value="UniProtKB-UniRule"/>
</dbReference>
<dbReference type="GO" id="GO:0016887">
    <property type="term" value="F:ATP hydrolysis activity"/>
    <property type="evidence" value="ECO:0007669"/>
    <property type="project" value="InterPro"/>
</dbReference>
<dbReference type="GO" id="GO:0140662">
    <property type="term" value="F:ATP-dependent protein folding chaperone"/>
    <property type="evidence" value="ECO:0007669"/>
    <property type="project" value="InterPro"/>
</dbReference>
<dbReference type="GO" id="GO:0046983">
    <property type="term" value="F:protein dimerization activity"/>
    <property type="evidence" value="ECO:0007669"/>
    <property type="project" value="InterPro"/>
</dbReference>
<dbReference type="GO" id="GO:0051082">
    <property type="term" value="F:unfolded protein binding"/>
    <property type="evidence" value="ECO:0007669"/>
    <property type="project" value="UniProtKB-UniRule"/>
</dbReference>
<dbReference type="GO" id="GO:0008270">
    <property type="term" value="F:zinc ion binding"/>
    <property type="evidence" value="ECO:0007669"/>
    <property type="project" value="InterPro"/>
</dbReference>
<dbReference type="GO" id="GO:0051301">
    <property type="term" value="P:cell division"/>
    <property type="evidence" value="ECO:0007669"/>
    <property type="project" value="TreeGrafter"/>
</dbReference>
<dbReference type="GO" id="GO:0051603">
    <property type="term" value="P:proteolysis involved in protein catabolic process"/>
    <property type="evidence" value="ECO:0007669"/>
    <property type="project" value="TreeGrafter"/>
</dbReference>
<dbReference type="CDD" id="cd19497">
    <property type="entry name" value="RecA-like_ClpX"/>
    <property type="match status" value="1"/>
</dbReference>
<dbReference type="FunFam" id="1.10.8.60:FF:000002">
    <property type="entry name" value="ATP-dependent Clp protease ATP-binding subunit ClpX"/>
    <property type="match status" value="1"/>
</dbReference>
<dbReference type="FunFam" id="3.40.50.300:FF:000005">
    <property type="entry name" value="ATP-dependent Clp protease ATP-binding subunit ClpX"/>
    <property type="match status" value="1"/>
</dbReference>
<dbReference type="Gene3D" id="1.10.8.60">
    <property type="match status" value="1"/>
</dbReference>
<dbReference type="Gene3D" id="6.20.220.10">
    <property type="entry name" value="ClpX chaperone, C4-type zinc finger domain"/>
    <property type="match status" value="1"/>
</dbReference>
<dbReference type="Gene3D" id="3.40.50.300">
    <property type="entry name" value="P-loop containing nucleotide triphosphate hydrolases"/>
    <property type="match status" value="1"/>
</dbReference>
<dbReference type="HAMAP" id="MF_00175">
    <property type="entry name" value="ClpX"/>
    <property type="match status" value="1"/>
</dbReference>
<dbReference type="InterPro" id="IPR003593">
    <property type="entry name" value="AAA+_ATPase"/>
</dbReference>
<dbReference type="InterPro" id="IPR050052">
    <property type="entry name" value="ATP-dep_Clp_protease_ClpX"/>
</dbReference>
<dbReference type="InterPro" id="IPR003959">
    <property type="entry name" value="ATPase_AAA_core"/>
</dbReference>
<dbReference type="InterPro" id="IPR019489">
    <property type="entry name" value="Clp_ATPase_C"/>
</dbReference>
<dbReference type="InterPro" id="IPR004487">
    <property type="entry name" value="Clp_protease_ATP-bd_su_ClpX"/>
</dbReference>
<dbReference type="InterPro" id="IPR046425">
    <property type="entry name" value="ClpX_bact"/>
</dbReference>
<dbReference type="InterPro" id="IPR027417">
    <property type="entry name" value="P-loop_NTPase"/>
</dbReference>
<dbReference type="InterPro" id="IPR010603">
    <property type="entry name" value="Znf_CppX_C4"/>
</dbReference>
<dbReference type="InterPro" id="IPR038366">
    <property type="entry name" value="Znf_CppX_C4_sf"/>
</dbReference>
<dbReference type="NCBIfam" id="TIGR00382">
    <property type="entry name" value="clpX"/>
    <property type="match status" value="1"/>
</dbReference>
<dbReference type="NCBIfam" id="NF003745">
    <property type="entry name" value="PRK05342.1"/>
    <property type="match status" value="1"/>
</dbReference>
<dbReference type="PANTHER" id="PTHR48102:SF7">
    <property type="entry name" value="ATP-DEPENDENT CLP PROTEASE ATP-BINDING SUBUNIT CLPX-LIKE, MITOCHONDRIAL"/>
    <property type="match status" value="1"/>
</dbReference>
<dbReference type="PANTHER" id="PTHR48102">
    <property type="entry name" value="ATP-DEPENDENT CLP PROTEASE ATP-BINDING SUBUNIT CLPX-LIKE, MITOCHONDRIAL-RELATED"/>
    <property type="match status" value="1"/>
</dbReference>
<dbReference type="Pfam" id="PF07724">
    <property type="entry name" value="AAA_2"/>
    <property type="match status" value="1"/>
</dbReference>
<dbReference type="Pfam" id="PF10431">
    <property type="entry name" value="ClpB_D2-small"/>
    <property type="match status" value="1"/>
</dbReference>
<dbReference type="Pfam" id="PF06689">
    <property type="entry name" value="zf-C4_ClpX"/>
    <property type="match status" value="1"/>
</dbReference>
<dbReference type="SMART" id="SM00382">
    <property type="entry name" value="AAA"/>
    <property type="match status" value="1"/>
</dbReference>
<dbReference type="SMART" id="SM01086">
    <property type="entry name" value="ClpB_D2-small"/>
    <property type="match status" value="1"/>
</dbReference>
<dbReference type="SMART" id="SM00994">
    <property type="entry name" value="zf-C4_ClpX"/>
    <property type="match status" value="1"/>
</dbReference>
<dbReference type="SUPFAM" id="SSF57716">
    <property type="entry name" value="Glucocorticoid receptor-like (DNA-binding domain)"/>
    <property type="match status" value="1"/>
</dbReference>
<dbReference type="SUPFAM" id="SSF52540">
    <property type="entry name" value="P-loop containing nucleoside triphosphate hydrolases"/>
    <property type="match status" value="1"/>
</dbReference>
<dbReference type="PROSITE" id="PS51902">
    <property type="entry name" value="CLPX_ZB"/>
    <property type="match status" value="1"/>
</dbReference>
<name>CLPX_HALHL</name>
<evidence type="ECO:0000255" key="1">
    <source>
        <dbReference type="HAMAP-Rule" id="MF_00175"/>
    </source>
</evidence>
<evidence type="ECO:0000255" key="2">
    <source>
        <dbReference type="PROSITE-ProRule" id="PRU01250"/>
    </source>
</evidence>
<organism>
    <name type="scientific">Halorhodospira halophila (strain DSM 244 / SL1)</name>
    <name type="common">Ectothiorhodospira halophila (strain DSM 244 / SL1)</name>
    <dbReference type="NCBI Taxonomy" id="349124"/>
    <lineage>
        <taxon>Bacteria</taxon>
        <taxon>Pseudomonadati</taxon>
        <taxon>Pseudomonadota</taxon>
        <taxon>Gammaproteobacteria</taxon>
        <taxon>Chromatiales</taxon>
        <taxon>Ectothiorhodospiraceae</taxon>
        <taxon>Halorhodospira</taxon>
    </lineage>
</organism>
<gene>
    <name evidence="1" type="primary">clpX</name>
    <name type="ordered locus">Hhal_0602</name>
</gene>
<proteinExistence type="inferred from homology"/>
<comment type="function">
    <text evidence="1">ATP-dependent specificity component of the Clp protease. It directs the protease to specific substrates. Can perform chaperone functions in the absence of ClpP.</text>
</comment>
<comment type="subunit">
    <text evidence="1">Component of the ClpX-ClpP complex. Forms a hexameric ring that, in the presence of ATP, binds to fourteen ClpP subunits assembled into a disk-like structure with a central cavity, resembling the structure of eukaryotic proteasomes.</text>
</comment>
<comment type="similarity">
    <text evidence="1">Belongs to the ClpX chaperone family.</text>
</comment>